<dbReference type="EMBL" id="AC125370">
    <property type="status" value="NOT_ANNOTATED_CDS"/>
    <property type="molecule type" value="Genomic_DNA"/>
</dbReference>
<dbReference type="EMBL" id="AC168882">
    <property type="status" value="NOT_ANNOTATED_CDS"/>
    <property type="molecule type" value="Genomic_DNA"/>
</dbReference>
<dbReference type="CCDS" id="CCDS52878.1"/>
<dbReference type="RefSeq" id="NP_001094952.2">
    <property type="nucleotide sequence ID" value="NM_001101482.2"/>
</dbReference>
<dbReference type="RefSeq" id="NP_001171202.1">
    <property type="nucleotide sequence ID" value="NM_001177731.1"/>
</dbReference>
<dbReference type="RefSeq" id="NP_001346884.1">
    <property type="nucleotide sequence ID" value="NM_001359955.1"/>
</dbReference>
<dbReference type="RefSeq" id="NP_001408298.1">
    <property type="nucleotide sequence ID" value="NM_001421369.1"/>
</dbReference>
<dbReference type="RefSeq" id="NP_001408299.1">
    <property type="nucleotide sequence ID" value="NM_001421370.1"/>
</dbReference>
<dbReference type="RefSeq" id="NP_001408300.1">
    <property type="nucleotide sequence ID" value="NM_001421371.1"/>
</dbReference>
<dbReference type="RefSeq" id="XP_006511237.1">
    <property type="nucleotide sequence ID" value="XM_006511174.2"/>
</dbReference>
<dbReference type="RefSeq" id="XP_006511238.1">
    <property type="nucleotide sequence ID" value="XM_006511175.2"/>
</dbReference>
<dbReference type="RefSeq" id="XP_006511239.1">
    <property type="nucleotide sequence ID" value="XM_006511176.4"/>
</dbReference>
<dbReference type="RefSeq" id="XP_006511240.1">
    <property type="nucleotide sequence ID" value="XM_006511177.5"/>
</dbReference>
<dbReference type="RefSeq" id="XP_006511241.1">
    <property type="nucleotide sequence ID" value="XM_006511178.3"/>
</dbReference>
<dbReference type="RefSeq" id="XP_006511242.1">
    <property type="nucleotide sequence ID" value="XM_006511179.4"/>
</dbReference>
<dbReference type="RefSeq" id="XP_006511243.1">
    <property type="nucleotide sequence ID" value="XM_006511180.3"/>
</dbReference>
<dbReference type="RefSeq" id="XP_030100245.1">
    <property type="nucleotide sequence ID" value="XM_030244385.2"/>
</dbReference>
<dbReference type="RefSeq" id="XP_036010903.1">
    <property type="nucleotide sequence ID" value="XM_036155010.1"/>
</dbReference>
<dbReference type="CORUM" id="D3Z1Q2"/>
<dbReference type="FunCoup" id="D3Z1Q2">
    <property type="interactions" value="745"/>
</dbReference>
<dbReference type="IntAct" id="D3Z1Q2">
    <property type="interactions" value="1"/>
</dbReference>
<dbReference type="MINT" id="D3Z1Q2"/>
<dbReference type="STRING" id="10090.ENSMUSP00000108774"/>
<dbReference type="GlyCosmos" id="D3Z1Q2">
    <property type="glycosylation" value="1 site, No reported glycans"/>
</dbReference>
<dbReference type="GlyGen" id="D3Z1Q2">
    <property type="glycosylation" value="1 site"/>
</dbReference>
<dbReference type="PhosphoSitePlus" id="D3Z1Q2"/>
<dbReference type="PaxDb" id="10090-ENSMUSP00000135904"/>
<dbReference type="ProteomicsDB" id="291398"/>
<dbReference type="Antibodypedia" id="2456">
    <property type="antibodies" value="118 antibodies from 20 providers"/>
</dbReference>
<dbReference type="Ensembl" id="ENSMUST00000049457.14">
    <property type="protein sequence ID" value="ENSMUSP00000046271.8"/>
    <property type="gene ID" value="ENSMUSG00000042761.15"/>
</dbReference>
<dbReference type="Ensembl" id="ENSMUST00000113149.8">
    <property type="protein sequence ID" value="ENSMUSP00000108774.2"/>
    <property type="gene ID" value="ENSMUSG00000042761.15"/>
</dbReference>
<dbReference type="Ensembl" id="ENSMUST00000179313.3">
    <property type="protein sequence ID" value="ENSMUSP00000135904.2"/>
    <property type="gene ID" value="ENSMUSG00000042761.15"/>
</dbReference>
<dbReference type="GeneID" id="244958"/>
<dbReference type="KEGG" id="mmu:244958"/>
<dbReference type="UCSC" id="uc012gxw.1">
    <property type="organism name" value="mouse"/>
</dbReference>
<dbReference type="AGR" id="MGI:3609239"/>
<dbReference type="CTD" id="112609"/>
<dbReference type="MGI" id="MGI:3609239">
    <property type="gene designation" value="Mrap2"/>
</dbReference>
<dbReference type="VEuPathDB" id="HostDB:ENSMUSG00000042761"/>
<dbReference type="eggNOG" id="ENOG502RYQM">
    <property type="taxonomic scope" value="Eukaryota"/>
</dbReference>
<dbReference type="GeneTree" id="ENSGT00650000093438"/>
<dbReference type="HOGENOM" id="CLU_110753_0_0_1"/>
<dbReference type="InParanoid" id="D3Z1Q2"/>
<dbReference type="OMA" id="WDYEYYE"/>
<dbReference type="OrthoDB" id="9904651at2759"/>
<dbReference type="PhylomeDB" id="D3Z1Q2"/>
<dbReference type="TreeFam" id="TF338691"/>
<dbReference type="BioGRID-ORCS" id="244958">
    <property type="hits" value="1 hit in 76 CRISPR screens"/>
</dbReference>
<dbReference type="ChiTaRS" id="Mrap2">
    <property type="organism name" value="mouse"/>
</dbReference>
<dbReference type="PRO" id="PR:D3Z1Q2"/>
<dbReference type="Proteomes" id="UP000000589">
    <property type="component" value="Chromosome 9"/>
</dbReference>
<dbReference type="RNAct" id="D3Z1Q2">
    <property type="molecule type" value="protein"/>
</dbReference>
<dbReference type="Bgee" id="ENSMUSG00000042761">
    <property type="expression patterns" value="Expressed in pontine nuclear group and 70 other cell types or tissues"/>
</dbReference>
<dbReference type="GO" id="GO:0005789">
    <property type="term" value="C:endoplasmic reticulum membrane"/>
    <property type="evidence" value="ECO:0007669"/>
    <property type="project" value="UniProtKB-SubCell"/>
</dbReference>
<dbReference type="GO" id="GO:0005886">
    <property type="term" value="C:plasma membrane"/>
    <property type="evidence" value="ECO:0007669"/>
    <property type="project" value="UniProtKB-SubCell"/>
</dbReference>
<dbReference type="GO" id="GO:0031780">
    <property type="term" value="F:corticotropin hormone receptor binding"/>
    <property type="evidence" value="ECO:0007669"/>
    <property type="project" value="Ensembl"/>
</dbReference>
<dbReference type="GO" id="GO:0042802">
    <property type="term" value="F:identical protein binding"/>
    <property type="evidence" value="ECO:0007669"/>
    <property type="project" value="Ensembl"/>
</dbReference>
<dbReference type="GO" id="GO:0030545">
    <property type="term" value="F:signaling receptor regulator activity"/>
    <property type="evidence" value="ECO:0000315"/>
    <property type="project" value="UniProtKB"/>
</dbReference>
<dbReference type="GO" id="GO:0070996">
    <property type="term" value="F:type 1 melanocortin receptor binding"/>
    <property type="evidence" value="ECO:0007669"/>
    <property type="project" value="Ensembl"/>
</dbReference>
<dbReference type="GO" id="GO:0031781">
    <property type="term" value="F:type 3 melanocortin receptor binding"/>
    <property type="evidence" value="ECO:0007669"/>
    <property type="project" value="Ensembl"/>
</dbReference>
<dbReference type="GO" id="GO:0031782">
    <property type="term" value="F:type 4 melanocortin receptor binding"/>
    <property type="evidence" value="ECO:0000314"/>
    <property type="project" value="UniProtKB"/>
</dbReference>
<dbReference type="GO" id="GO:0031783">
    <property type="term" value="F:type 5 melanocortin receptor binding"/>
    <property type="evidence" value="ECO:0007669"/>
    <property type="project" value="Ensembl"/>
</dbReference>
<dbReference type="GO" id="GO:0097009">
    <property type="term" value="P:energy homeostasis"/>
    <property type="evidence" value="ECO:0000315"/>
    <property type="project" value="UniProtKB"/>
</dbReference>
<dbReference type="GO" id="GO:0006112">
    <property type="term" value="P:energy reserve metabolic process"/>
    <property type="evidence" value="ECO:0000315"/>
    <property type="project" value="UniProtKB"/>
</dbReference>
<dbReference type="GO" id="GO:0007631">
    <property type="term" value="P:feeding behavior"/>
    <property type="evidence" value="ECO:0000315"/>
    <property type="project" value="UniProtKB"/>
</dbReference>
<dbReference type="GO" id="GO:0106072">
    <property type="term" value="P:negative regulation of adenylate cyclase-activating G protein-coupled receptor signaling pathway"/>
    <property type="evidence" value="ECO:0007669"/>
    <property type="project" value="Ensembl"/>
</dbReference>
<dbReference type="GO" id="GO:1903077">
    <property type="term" value="P:negative regulation of protein localization to plasma membrane"/>
    <property type="evidence" value="ECO:0007669"/>
    <property type="project" value="Ensembl"/>
</dbReference>
<dbReference type="GO" id="GO:0106071">
    <property type="term" value="P:positive regulation of adenylate cyclase-activating G protein-coupled receptor signaling pathway"/>
    <property type="evidence" value="ECO:0007669"/>
    <property type="project" value="Ensembl"/>
</dbReference>
<dbReference type="GO" id="GO:0072659">
    <property type="term" value="P:protein localization to plasma membrane"/>
    <property type="evidence" value="ECO:0007669"/>
    <property type="project" value="Ensembl"/>
</dbReference>
<dbReference type="InterPro" id="IPR028111">
    <property type="entry name" value="MRAP"/>
</dbReference>
<dbReference type="PANTHER" id="PTHR28675">
    <property type="entry name" value="MELANOCORTIN-2 RECEPTOR ACCESSORY PROTEIN 2"/>
    <property type="match status" value="1"/>
</dbReference>
<dbReference type="PANTHER" id="PTHR28675:SF1">
    <property type="entry name" value="MELANOCORTIN-2 RECEPTOR ACCESSORY PROTEIN 2"/>
    <property type="match status" value="1"/>
</dbReference>
<dbReference type="Pfam" id="PF15183">
    <property type="entry name" value="MRAP"/>
    <property type="match status" value="1"/>
</dbReference>
<reference key="1">
    <citation type="journal article" date="2009" name="PLoS Biol.">
        <title>Lineage-specific biology revealed by a finished genome assembly of the mouse.</title>
        <authorList>
            <person name="Church D.M."/>
            <person name="Goodstadt L."/>
            <person name="Hillier L.W."/>
            <person name="Zody M.C."/>
            <person name="Goldstein S."/>
            <person name="She X."/>
            <person name="Bult C.J."/>
            <person name="Agarwala R."/>
            <person name="Cherry J.L."/>
            <person name="DiCuccio M."/>
            <person name="Hlavina W."/>
            <person name="Kapustin Y."/>
            <person name="Meric P."/>
            <person name="Maglott D."/>
            <person name="Birtle Z."/>
            <person name="Marques A.C."/>
            <person name="Graves T."/>
            <person name="Zhou S."/>
            <person name="Teague B."/>
            <person name="Potamousis K."/>
            <person name="Churas C."/>
            <person name="Place M."/>
            <person name="Herschleb J."/>
            <person name="Runnheim R."/>
            <person name="Forrest D."/>
            <person name="Amos-Landgraf J."/>
            <person name="Schwartz D.C."/>
            <person name="Cheng Z."/>
            <person name="Lindblad-Toh K."/>
            <person name="Eichler E.E."/>
            <person name="Ponting C.P."/>
        </authorList>
    </citation>
    <scope>NUCLEOTIDE SEQUENCE [LARGE SCALE GENOMIC DNA]</scope>
    <source>
        <strain>C57BL/6J</strain>
    </source>
</reference>
<reference key="2">
    <citation type="journal article" date="2010" name="Sci. Signal.">
        <title>Regulation of G protein-coupled receptor signaling: specific dominant-negative effects of melanocortin 2 receptor accessory protein 2.</title>
        <authorList>
            <person name="Sebag J.A."/>
            <person name="Hinkle P.M."/>
        </authorList>
    </citation>
    <scope>FUNCTION</scope>
</reference>
<reference key="3">
    <citation type="journal article" date="2013" name="Science">
        <title>Loss of function of the melanocortin 2 receptor accessory protein 2 is associated with mammalian obesity.</title>
        <authorList>
            <person name="Asai M."/>
            <person name="Ramachandrappa S."/>
            <person name="Joachim M."/>
            <person name="Shen Y."/>
            <person name="Zhang R."/>
            <person name="Nuthalapati N."/>
            <person name="Ramanathan V."/>
            <person name="Strochlic D.E."/>
            <person name="Ferket P."/>
            <person name="Linhart K."/>
            <person name="Ho C."/>
            <person name="Novoselova T.V."/>
            <person name="Garg S."/>
            <person name="Ridderstrale M."/>
            <person name="Marcus C."/>
            <person name="Hirschhorn J.N."/>
            <person name="Keogh J.M."/>
            <person name="O'Rahilly S."/>
            <person name="Chan L.F."/>
            <person name="Clark A.J."/>
            <person name="Farooqi I.S."/>
            <person name="Majzoub J.A."/>
        </authorList>
    </citation>
    <scope>FUNCTION</scope>
    <scope>DISRUPTION PHENOTYPE</scope>
    <scope>INTERACTION WITH MC4R</scope>
    <scope>TISSUE SPECIFICITY</scope>
</reference>
<name>MRAP2_MOUSE</name>
<protein>
    <recommendedName>
        <fullName>Melanocortin-2 receptor accessory protein 2</fullName>
    </recommendedName>
</protein>
<proteinExistence type="evidence at protein level"/>
<keyword id="KW-1003">Cell membrane</keyword>
<keyword id="KW-0256">Endoplasmic reticulum</keyword>
<keyword id="KW-0325">Glycoprotein</keyword>
<keyword id="KW-0472">Membrane</keyword>
<keyword id="KW-0597">Phosphoprotein</keyword>
<keyword id="KW-1185">Reference proteome</keyword>
<keyword id="KW-0812">Transmembrane</keyword>
<keyword id="KW-1133">Transmembrane helix</keyword>
<feature type="chain" id="PRO_0000424027" description="Melanocortin-2 receptor accessory protein 2">
    <location>
        <begin position="1"/>
        <end position="207"/>
    </location>
</feature>
<feature type="transmembrane region" description="Helical" evidence="3">
    <location>
        <begin position="47"/>
        <end position="67"/>
    </location>
</feature>
<feature type="region of interest" description="Disordered" evidence="4">
    <location>
        <begin position="1"/>
        <end position="21"/>
    </location>
</feature>
<feature type="compositionally biased region" description="Polar residues" evidence="4">
    <location>
        <begin position="7"/>
        <end position="21"/>
    </location>
</feature>
<feature type="modified residue" description="Phosphoserine" evidence="2">
    <location>
        <position position="91"/>
    </location>
</feature>
<feature type="glycosylation site" description="N-linked (GlcNAc...) asparagine" evidence="3">
    <location>
        <position position="11"/>
    </location>
</feature>
<comment type="function">
    <text evidence="5 6">Modulator of melanocortin receptor 4 (MC4R), a receptor involved in energy homeostasis. Plays a central role in the control of energy homeostasis and body weight regulation by increasing ligand-sensitivity of MC4R and MC4R-mediated generation of cAMP. May also act as a negative regulator of MC2R: competes with MRAP for binding to MC2R and impairs the binding of corticotropin (ACTH) to MC2R. May also regulate activity of other melanocortin receptors (MC1R, MC3R and MC5R); however, additional evidence is required in vivo.</text>
</comment>
<comment type="subunit">
    <text evidence="1 6">Homodimer and heterodimer. Forms antiparallel homodimers and heterodimers with MRAP. Interacts with MC1R, MC2R, MC3R and MC5R (By similarity). Interacts with MC4R.</text>
</comment>
<comment type="interaction">
    <interactant intactId="EBI-44454554">
        <id>D3Z1Q2</id>
    </interactant>
    <interactant intactId="EBI-44454520">
        <id>Q8JZL2</id>
        <label>Mchr1</label>
    </interactant>
    <organismsDiffer>false</organismsDiffer>
    <experiments>4</experiments>
</comment>
<comment type="subcellular location">
    <subcellularLocation>
        <location evidence="1">Cell membrane</location>
        <topology evidence="1">Single-pass membrane protein</topology>
    </subcellularLocation>
    <subcellularLocation>
        <location evidence="1">Endoplasmic reticulum membrane</location>
        <topology evidence="1">Single-pass membrane protein</topology>
    </subcellularLocation>
    <text evidence="1">The formation of antiparallel homo- and heterodimers suggest that N- and C-terminus can both localize in the cytoplasmic and extracellular parts, depending on the context.</text>
</comment>
<comment type="tissue specificity">
    <text evidence="6">Predominantly expressed in the brain, mainly in the pons and cerebellum but also in regions involved in energy homeostasis, such as the hypothalamus and brainstem.</text>
</comment>
<comment type="disruption phenotype">
    <text evidence="6">Obesity. Mice are normal at birth, with normal weight gain and post-weaning food intake during early life, although young males trend toward greater weight and food intake with advancing age. Mice of both genders gradually become extremely obese on a diet of regular chow ad libitum.</text>
</comment>
<comment type="similarity">
    <text evidence="7">Belongs to the MRAP family.</text>
</comment>
<evidence type="ECO:0000250" key="1"/>
<evidence type="ECO:0000250" key="2">
    <source>
        <dbReference type="UniProtKB" id="Q96G30"/>
    </source>
</evidence>
<evidence type="ECO:0000255" key="3"/>
<evidence type="ECO:0000256" key="4">
    <source>
        <dbReference type="SAM" id="MobiDB-lite"/>
    </source>
</evidence>
<evidence type="ECO:0000269" key="5">
    <source>
    </source>
</evidence>
<evidence type="ECO:0000269" key="6">
    <source>
    </source>
</evidence>
<evidence type="ECO:0000305" key="7"/>
<organism>
    <name type="scientific">Mus musculus</name>
    <name type="common">Mouse</name>
    <dbReference type="NCBI Taxonomy" id="10090"/>
    <lineage>
        <taxon>Eukaryota</taxon>
        <taxon>Metazoa</taxon>
        <taxon>Chordata</taxon>
        <taxon>Craniata</taxon>
        <taxon>Vertebrata</taxon>
        <taxon>Euteleostomi</taxon>
        <taxon>Mammalia</taxon>
        <taxon>Eutheria</taxon>
        <taxon>Euarchontoglires</taxon>
        <taxon>Glires</taxon>
        <taxon>Rodentia</taxon>
        <taxon>Myomorpha</taxon>
        <taxon>Muroidea</taxon>
        <taxon>Muridae</taxon>
        <taxon>Murinae</taxon>
        <taxon>Mus</taxon>
        <taxon>Mus</taxon>
    </lineage>
</organism>
<gene>
    <name type="primary">Mrap2</name>
</gene>
<accession>D3Z1Q2</accession>
<accession>D3YVA7</accession>
<accession>D3YZ75</accession>
<accession>D3Z746</accession>
<sequence>MEMSAQRLASNRTSPQSPSNSDYTWEYEYYEIGPVSFEGLKAHKYSIVIGFWVGLAVFVIFMFFVLTLLTKTGAPHQDNAESSERRFRMNSFVSDFGKPLESDKVFSRQGNEESRSLFHCYINEVEHLDRVKVCHQTTAIDSDVHLQEASRSSGRPEEELARFMKFDIPNFVNTEQSSFGEDDLLISEAPVLLENKPVSQTSRIDLD</sequence>